<evidence type="ECO:0000250" key="1"/>
<evidence type="ECO:0000250" key="2">
    <source>
        <dbReference type="UniProtKB" id="Q9UK53"/>
    </source>
</evidence>
<evidence type="ECO:0000250" key="3">
    <source>
        <dbReference type="UniProtKB" id="Q9UNL4"/>
    </source>
</evidence>
<evidence type="ECO:0000255" key="4"/>
<evidence type="ECO:0000255" key="5">
    <source>
        <dbReference type="PROSITE-ProRule" id="PRU00146"/>
    </source>
</evidence>
<evidence type="ECO:0000256" key="6">
    <source>
        <dbReference type="SAM" id="MobiDB-lite"/>
    </source>
</evidence>
<evidence type="ECO:0000269" key="7">
    <source>
    </source>
</evidence>
<evidence type="ECO:0000303" key="8">
    <source>
    </source>
</evidence>
<evidence type="ECO:0000303" key="9">
    <source>
    </source>
</evidence>
<evidence type="ECO:0000303" key="10">
    <source>
    </source>
</evidence>
<evidence type="ECO:0000305" key="11"/>
<evidence type="ECO:0007744" key="12">
    <source>
    </source>
</evidence>
<evidence type="ECO:0007829" key="13">
    <source>
        <dbReference type="PDB" id="1WEN"/>
    </source>
</evidence>
<name>ING4_MOUSE</name>
<keyword id="KW-0002">3D-structure</keyword>
<keyword id="KW-0007">Acetylation</keyword>
<keyword id="KW-0025">Alternative splicing</keyword>
<keyword id="KW-0053">Apoptosis</keyword>
<keyword id="KW-0131">Cell cycle</keyword>
<keyword id="KW-0156">Chromatin regulator</keyword>
<keyword id="KW-0164">Citrullination</keyword>
<keyword id="KW-0175">Coiled coil</keyword>
<keyword id="KW-0479">Metal-binding</keyword>
<keyword id="KW-0539">Nucleus</keyword>
<keyword id="KW-1185">Reference proteome</keyword>
<keyword id="KW-0043">Tumor suppressor</keyword>
<keyword id="KW-0862">Zinc</keyword>
<keyword id="KW-0863">Zinc-finger</keyword>
<dbReference type="EMBL" id="AY035880">
    <property type="protein sequence ID" value="AAK63168.1"/>
    <property type="molecule type" value="mRNA"/>
</dbReference>
<dbReference type="EMBL" id="AY035881">
    <property type="protein sequence ID" value="AAK63169.1"/>
    <property type="molecule type" value="mRNA"/>
</dbReference>
<dbReference type="EMBL" id="AY036107">
    <property type="protein sequence ID" value="AAK64509.1"/>
    <property type="molecule type" value="mRNA"/>
</dbReference>
<dbReference type="EMBL" id="AK002821">
    <property type="protein sequence ID" value="BAC25009.1"/>
    <property type="status" value="ALT_FRAME"/>
    <property type="molecule type" value="mRNA"/>
</dbReference>
<dbReference type="EMBL" id="AK009267">
    <property type="protein sequence ID" value="BAB26183.1"/>
    <property type="molecule type" value="mRNA"/>
</dbReference>
<dbReference type="EMBL" id="AK031633">
    <property type="protein sequence ID" value="BAC27489.1"/>
    <property type="molecule type" value="mRNA"/>
</dbReference>
<dbReference type="EMBL" id="AK050522">
    <property type="protein sequence ID" value="BAC34304.1"/>
    <property type="molecule type" value="mRNA"/>
</dbReference>
<dbReference type="EMBL" id="BC009127">
    <property type="protein sequence ID" value="AAH09127.1"/>
    <property type="molecule type" value="mRNA"/>
</dbReference>
<dbReference type="CCDS" id="CCDS39632.1">
    <molecule id="Q8C0D7-2"/>
</dbReference>
<dbReference type="CCDS" id="CCDS90121.1">
    <molecule id="Q8C0D7-1"/>
</dbReference>
<dbReference type="RefSeq" id="NP_001355624.1">
    <molecule id="Q8C0D7-1"/>
    <property type="nucleotide sequence ID" value="NM_001368695.1"/>
</dbReference>
<dbReference type="RefSeq" id="NP_579923.1">
    <molecule id="Q8C0D7-2"/>
    <property type="nucleotide sequence ID" value="NM_133345.2"/>
</dbReference>
<dbReference type="PDB" id="1WEN">
    <property type="method" value="NMR"/>
    <property type="chains" value="A=188-245"/>
</dbReference>
<dbReference type="PDB" id="1WEU">
    <property type="method" value="NMR"/>
    <property type="chains" value="A=168-245"/>
</dbReference>
<dbReference type="PDBsum" id="1WEN"/>
<dbReference type="PDBsum" id="1WEU"/>
<dbReference type="BMRB" id="Q8C0D7"/>
<dbReference type="SMR" id="Q8C0D7"/>
<dbReference type="BioGRID" id="205719">
    <property type="interactions" value="1"/>
</dbReference>
<dbReference type="ComplexPortal" id="CPX-794">
    <property type="entry name" value="HBO1-4.1 histone acetyltransferase complex"/>
</dbReference>
<dbReference type="ComplexPortal" id="CPX-795">
    <property type="entry name" value="HBO1-4.2 histone acetyltransferase complex"/>
</dbReference>
<dbReference type="ComplexPortal" id="CPX-796">
    <property type="entry name" value="HBO1-4.3 histone acetyltransferase complex"/>
</dbReference>
<dbReference type="FunCoup" id="Q8C0D7">
    <property type="interactions" value="2955"/>
</dbReference>
<dbReference type="IntAct" id="Q8C0D7">
    <property type="interactions" value="5"/>
</dbReference>
<dbReference type="MINT" id="Q8C0D7"/>
<dbReference type="STRING" id="10090.ENSMUSP00000032480"/>
<dbReference type="iPTMnet" id="Q8C0D7"/>
<dbReference type="PhosphoSitePlus" id="Q8C0D7"/>
<dbReference type="PaxDb" id="10090-ENSMUSP00000121519"/>
<dbReference type="PeptideAtlas" id="Q8C0D7"/>
<dbReference type="ProteomicsDB" id="267245">
    <molecule id="Q8C0D7-1"/>
</dbReference>
<dbReference type="ProteomicsDB" id="267246">
    <molecule id="Q8C0D7-2"/>
</dbReference>
<dbReference type="ProteomicsDB" id="267247">
    <molecule id="Q8C0D7-3"/>
</dbReference>
<dbReference type="ProteomicsDB" id="267248">
    <molecule id="Q8C0D7-4"/>
</dbReference>
<dbReference type="ProteomicsDB" id="267249">
    <molecule id="Q8C0D7-5"/>
</dbReference>
<dbReference type="Pumba" id="Q8C0D7"/>
<dbReference type="Antibodypedia" id="22581">
    <property type="antibodies" value="284 antibodies from 33 providers"/>
</dbReference>
<dbReference type="DNASU" id="28019"/>
<dbReference type="Ensembl" id="ENSMUST00000032480.14">
    <molecule id="Q8C0D7-2"/>
    <property type="protein sequence ID" value="ENSMUSP00000032480.8"/>
    <property type="gene ID" value="ENSMUSG00000030330.16"/>
</dbReference>
<dbReference type="Ensembl" id="ENSMUST00000112417.9">
    <molecule id="Q8C0D7-5"/>
    <property type="protein sequence ID" value="ENSMUSP00000108036.3"/>
    <property type="gene ID" value="ENSMUSG00000030330.16"/>
</dbReference>
<dbReference type="Ensembl" id="ENSMUST00000140131.8">
    <molecule id="Q8C0D7-1"/>
    <property type="protein sequence ID" value="ENSMUSP00000121519.2"/>
    <property type="gene ID" value="ENSMUSG00000030330.16"/>
</dbReference>
<dbReference type="GeneID" id="28019"/>
<dbReference type="KEGG" id="mmu:28019"/>
<dbReference type="UCSC" id="uc009dtd.1">
    <molecule id="Q8C0D7-2"/>
    <property type="organism name" value="mouse"/>
</dbReference>
<dbReference type="UCSC" id="uc009dtf.1">
    <molecule id="Q8C0D7-1"/>
    <property type="organism name" value="mouse"/>
</dbReference>
<dbReference type="AGR" id="MGI:107307"/>
<dbReference type="CTD" id="51147"/>
<dbReference type="MGI" id="MGI:107307">
    <property type="gene designation" value="Ing4"/>
</dbReference>
<dbReference type="VEuPathDB" id="HostDB:ENSMUSG00000030330"/>
<dbReference type="eggNOG" id="KOG1973">
    <property type="taxonomic scope" value="Eukaryota"/>
</dbReference>
<dbReference type="GeneTree" id="ENSGT00940000159033"/>
<dbReference type="HOGENOM" id="CLU_031900_5_1_1"/>
<dbReference type="InParanoid" id="Q8C0D7"/>
<dbReference type="OMA" id="PIYITPQ"/>
<dbReference type="OrthoDB" id="5411773at2759"/>
<dbReference type="PhylomeDB" id="Q8C0D7"/>
<dbReference type="TreeFam" id="TF352014"/>
<dbReference type="Reactome" id="R-MMU-3214847">
    <property type="pathway name" value="HATs acetylate histones"/>
</dbReference>
<dbReference type="BioGRID-ORCS" id="28019">
    <property type="hits" value="3 hits in 81 CRISPR screens"/>
</dbReference>
<dbReference type="ChiTaRS" id="Ing4">
    <property type="organism name" value="mouse"/>
</dbReference>
<dbReference type="EvolutionaryTrace" id="Q8C0D7"/>
<dbReference type="PRO" id="PR:Q8C0D7"/>
<dbReference type="Proteomes" id="UP000000589">
    <property type="component" value="Chromosome 6"/>
</dbReference>
<dbReference type="RNAct" id="Q8C0D7">
    <property type="molecule type" value="protein"/>
</dbReference>
<dbReference type="Bgee" id="ENSMUSG00000030330">
    <property type="expression patterns" value="Expressed in cortical plate and 133 other cell types or tissues"/>
</dbReference>
<dbReference type="GO" id="GO:0005829">
    <property type="term" value="C:cytosol"/>
    <property type="evidence" value="ECO:0007669"/>
    <property type="project" value="Ensembl"/>
</dbReference>
<dbReference type="GO" id="GO:0000123">
    <property type="term" value="C:histone acetyltransferase complex"/>
    <property type="evidence" value="ECO:0000250"/>
    <property type="project" value="UniProtKB"/>
</dbReference>
<dbReference type="GO" id="GO:0045111">
    <property type="term" value="C:intermediate filament cytoskeleton"/>
    <property type="evidence" value="ECO:0007669"/>
    <property type="project" value="Ensembl"/>
</dbReference>
<dbReference type="GO" id="GO:0005654">
    <property type="term" value="C:nucleoplasm"/>
    <property type="evidence" value="ECO:0000266"/>
    <property type="project" value="ComplexPortal"/>
</dbReference>
<dbReference type="GO" id="GO:0005634">
    <property type="term" value="C:nucleus"/>
    <property type="evidence" value="ECO:0000314"/>
    <property type="project" value="UniProtKB"/>
</dbReference>
<dbReference type="GO" id="GO:0036408">
    <property type="term" value="F:histone H3K14 acetyltransferase activity"/>
    <property type="evidence" value="ECO:0007669"/>
    <property type="project" value="Ensembl"/>
</dbReference>
<dbReference type="GO" id="GO:0140002">
    <property type="term" value="F:histone H3K4me3 reader activity"/>
    <property type="evidence" value="ECO:0007669"/>
    <property type="project" value="Ensembl"/>
</dbReference>
<dbReference type="GO" id="GO:0043997">
    <property type="term" value="F:histone H4K12 acetyltransferase activity"/>
    <property type="evidence" value="ECO:0007669"/>
    <property type="project" value="Ensembl"/>
</dbReference>
<dbReference type="GO" id="GO:0043995">
    <property type="term" value="F:histone H4K5 acetyltransferase activity"/>
    <property type="evidence" value="ECO:0007669"/>
    <property type="project" value="Ensembl"/>
</dbReference>
<dbReference type="GO" id="GO:0043996">
    <property type="term" value="F:histone H4K8 acetyltransferase activity"/>
    <property type="evidence" value="ECO:0007669"/>
    <property type="project" value="Ensembl"/>
</dbReference>
<dbReference type="GO" id="GO:0003713">
    <property type="term" value="F:transcription coactivator activity"/>
    <property type="evidence" value="ECO:0000250"/>
    <property type="project" value="UniProtKB"/>
</dbReference>
<dbReference type="GO" id="GO:0008270">
    <property type="term" value="F:zinc ion binding"/>
    <property type="evidence" value="ECO:0007669"/>
    <property type="project" value="UniProtKB-KW"/>
</dbReference>
<dbReference type="GO" id="GO:0006915">
    <property type="term" value="P:apoptotic process"/>
    <property type="evidence" value="ECO:0007669"/>
    <property type="project" value="UniProtKB-KW"/>
</dbReference>
<dbReference type="GO" id="GO:0140889">
    <property type="term" value="P:DNA replication-dependent chromatin disassembly"/>
    <property type="evidence" value="ECO:0000250"/>
    <property type="project" value="UniProtKB"/>
</dbReference>
<dbReference type="GO" id="GO:0008285">
    <property type="term" value="P:negative regulation of cell population proliferation"/>
    <property type="evidence" value="ECO:0007669"/>
    <property type="project" value="Ensembl"/>
</dbReference>
<dbReference type="GO" id="GO:0045892">
    <property type="term" value="P:negative regulation of DNA-templated transcription"/>
    <property type="evidence" value="ECO:0007669"/>
    <property type="project" value="Ensembl"/>
</dbReference>
<dbReference type="GO" id="GO:0045926">
    <property type="term" value="P:negative regulation of growth"/>
    <property type="evidence" value="ECO:0007669"/>
    <property type="project" value="Ensembl"/>
</dbReference>
<dbReference type="GO" id="GO:0043065">
    <property type="term" value="P:positive regulation of apoptotic process"/>
    <property type="evidence" value="ECO:0000314"/>
    <property type="project" value="UniProtKB"/>
</dbReference>
<dbReference type="GO" id="GO:0043517">
    <property type="term" value="P:positive regulation of DNA damage response, signal transduction by p53 class mediator"/>
    <property type="evidence" value="ECO:0007669"/>
    <property type="project" value="Ensembl"/>
</dbReference>
<dbReference type="GO" id="GO:0051726">
    <property type="term" value="P:regulation of cell cycle"/>
    <property type="evidence" value="ECO:0000266"/>
    <property type="project" value="ComplexPortal"/>
</dbReference>
<dbReference type="GO" id="GO:1902749">
    <property type="term" value="P:regulation of cell cycle G2/M phase transition"/>
    <property type="evidence" value="ECO:0007669"/>
    <property type="project" value="Ensembl"/>
</dbReference>
<dbReference type="GO" id="GO:0001558">
    <property type="term" value="P:regulation of cell growth"/>
    <property type="evidence" value="ECO:0000266"/>
    <property type="project" value="ComplexPortal"/>
</dbReference>
<dbReference type="GO" id="GO:2000278">
    <property type="term" value="P:regulation of DNA biosynthetic process"/>
    <property type="evidence" value="ECO:0000266"/>
    <property type="project" value="ComplexPortal"/>
</dbReference>
<dbReference type="GO" id="GO:0006355">
    <property type="term" value="P:regulation of DNA-templated transcription"/>
    <property type="evidence" value="ECO:0000266"/>
    <property type="project" value="ComplexPortal"/>
</dbReference>
<dbReference type="CDD" id="cd16862">
    <property type="entry name" value="ING_ING4"/>
    <property type="match status" value="1"/>
</dbReference>
<dbReference type="CDD" id="cd15684">
    <property type="entry name" value="PHD_ING4"/>
    <property type="match status" value="1"/>
</dbReference>
<dbReference type="FunFam" id="3.30.40.10:FF:000016">
    <property type="entry name" value="Inhibitor of growth protein"/>
    <property type="match status" value="1"/>
</dbReference>
<dbReference type="Gene3D" id="6.10.140.1740">
    <property type="match status" value="1"/>
</dbReference>
<dbReference type="Gene3D" id="3.30.40.10">
    <property type="entry name" value="Zinc/RING finger domain, C3HC4 (zinc finger)"/>
    <property type="match status" value="1"/>
</dbReference>
<dbReference type="InterPro" id="IPR028651">
    <property type="entry name" value="ING_fam"/>
</dbReference>
<dbReference type="InterPro" id="IPR024610">
    <property type="entry name" value="ING_N_histone-binding"/>
</dbReference>
<dbReference type="InterPro" id="IPR019786">
    <property type="entry name" value="Zinc_finger_PHD-type_CS"/>
</dbReference>
<dbReference type="InterPro" id="IPR011011">
    <property type="entry name" value="Znf_FYVE_PHD"/>
</dbReference>
<dbReference type="InterPro" id="IPR001965">
    <property type="entry name" value="Znf_PHD"/>
</dbReference>
<dbReference type="InterPro" id="IPR019787">
    <property type="entry name" value="Znf_PHD-finger"/>
</dbReference>
<dbReference type="InterPro" id="IPR013083">
    <property type="entry name" value="Znf_RING/FYVE/PHD"/>
</dbReference>
<dbReference type="PANTHER" id="PTHR10333">
    <property type="entry name" value="INHIBITOR OF GROWTH PROTEIN"/>
    <property type="match status" value="1"/>
</dbReference>
<dbReference type="PANTHER" id="PTHR10333:SF106">
    <property type="entry name" value="INHIBITOR OF GROWTH PROTEIN 4"/>
    <property type="match status" value="1"/>
</dbReference>
<dbReference type="Pfam" id="PF12998">
    <property type="entry name" value="ING"/>
    <property type="match status" value="1"/>
</dbReference>
<dbReference type="SMART" id="SM01408">
    <property type="entry name" value="ING"/>
    <property type="match status" value="1"/>
</dbReference>
<dbReference type="SMART" id="SM00249">
    <property type="entry name" value="PHD"/>
    <property type="match status" value="1"/>
</dbReference>
<dbReference type="SUPFAM" id="SSF57903">
    <property type="entry name" value="FYVE/PHD zinc finger"/>
    <property type="match status" value="1"/>
</dbReference>
<dbReference type="PROSITE" id="PS01359">
    <property type="entry name" value="ZF_PHD_1"/>
    <property type="match status" value="1"/>
</dbReference>
<dbReference type="PROSITE" id="PS50016">
    <property type="entry name" value="ZF_PHD_2"/>
    <property type="match status" value="1"/>
</dbReference>
<feature type="chain" id="PRO_0000212669" description="Inhibitor of growth protein 4">
    <location>
        <begin position="1"/>
        <end position="249"/>
    </location>
</feature>
<feature type="zinc finger region" description="PHD-type" evidence="5">
    <location>
        <begin position="196"/>
        <end position="245"/>
    </location>
</feature>
<feature type="region of interest" description="Disordered" evidence="6">
    <location>
        <begin position="115"/>
        <end position="163"/>
    </location>
</feature>
<feature type="coiled-coil region" evidence="4">
    <location>
        <begin position="25"/>
        <end position="118"/>
    </location>
</feature>
<feature type="short sequence motif" description="Bipartite nuclear localization signal" evidence="1">
    <location>
        <begin position="127"/>
        <end position="148"/>
    </location>
</feature>
<feature type="binding site" evidence="2">
    <location>
        <position position="199"/>
    </location>
    <ligand>
        <name>Zn(2+)</name>
        <dbReference type="ChEBI" id="CHEBI:29105"/>
        <label>1</label>
    </ligand>
</feature>
<feature type="binding site" evidence="2">
    <location>
        <position position="201"/>
    </location>
    <ligand>
        <name>Zn(2+)</name>
        <dbReference type="ChEBI" id="CHEBI:29105"/>
        <label>1</label>
    </ligand>
</feature>
<feature type="binding site" evidence="2">
    <location>
        <position position="212"/>
    </location>
    <ligand>
        <name>Zn(2+)</name>
        <dbReference type="ChEBI" id="CHEBI:29105"/>
        <label>2</label>
    </ligand>
</feature>
<feature type="binding site" evidence="2">
    <location>
        <position position="217"/>
    </location>
    <ligand>
        <name>Zn(2+)</name>
        <dbReference type="ChEBI" id="CHEBI:29105"/>
        <label>2</label>
    </ligand>
</feature>
<feature type="binding site" evidence="2">
    <location>
        <position position="223"/>
    </location>
    <ligand>
        <name>Zn(2+)</name>
        <dbReference type="ChEBI" id="CHEBI:29105"/>
        <label>1</label>
    </ligand>
</feature>
<feature type="binding site" evidence="2">
    <location>
        <position position="226"/>
    </location>
    <ligand>
        <name>Zn(2+)</name>
        <dbReference type="ChEBI" id="CHEBI:29105"/>
        <label>1</label>
    </ligand>
</feature>
<feature type="binding site" evidence="2">
    <location>
        <position position="239"/>
    </location>
    <ligand>
        <name>Zn(2+)</name>
        <dbReference type="ChEBI" id="CHEBI:29105"/>
        <label>2</label>
    </ligand>
</feature>
<feature type="binding site" evidence="2">
    <location>
        <position position="242"/>
    </location>
    <ligand>
        <name>Zn(2+)</name>
        <dbReference type="ChEBI" id="CHEBI:29105"/>
        <label>2</label>
    </ligand>
</feature>
<feature type="site" description="Histone H3K4me3 binding" evidence="2">
    <location>
        <position position="198"/>
    </location>
</feature>
<feature type="site" description="Histone H3K4me3 binding" evidence="2">
    <location>
        <position position="209"/>
    </location>
</feature>
<feature type="site" description="Histone H3K4me3 binding" evidence="2">
    <location>
        <position position="213"/>
    </location>
</feature>
<feature type="site" description="Histone H3K4me3 binding" evidence="2">
    <location>
        <position position="221"/>
    </location>
</feature>
<feature type="modified residue" description="N6-acetyllysine" evidence="3">
    <location>
        <position position="112"/>
    </location>
</feature>
<feature type="modified residue" description="N6-acetyllysine" evidence="12">
    <location>
        <position position="127"/>
    </location>
</feature>
<feature type="modified residue" description="N6-acetyllysine" evidence="12">
    <location>
        <position position="129"/>
    </location>
</feature>
<feature type="modified residue" description="Citrulline" evidence="1">
    <location>
        <position position="133"/>
    </location>
</feature>
<feature type="modified residue" description="N6-acetyllysine" evidence="12">
    <location>
        <position position="146"/>
    </location>
</feature>
<feature type="modified residue" description="N6-acetyllysine" evidence="12">
    <location>
        <position position="148"/>
    </location>
</feature>
<feature type="modified residue" description="N6-acetyllysine" evidence="12">
    <location>
        <position position="156"/>
    </location>
</feature>
<feature type="modified residue" description="Citrulline" evidence="1">
    <location>
        <position position="166"/>
    </location>
</feature>
<feature type="splice variant" id="VSP_012520" description="In isoform 5." evidence="8">
    <location>
        <begin position="127"/>
        <end position="130"/>
    </location>
</feature>
<feature type="splice variant" id="VSP_012521" description="In isoform 2, isoform 3 and isoform 4." evidence="8 9 10">
    <original>K</original>
    <variation>S</variation>
    <location>
        <position position="131"/>
    </location>
</feature>
<feature type="splice variant" id="VSP_012522" description="In isoform 2, isoform 3 and isoform 4." evidence="8 9 10">
    <location>
        <position position="132"/>
    </location>
</feature>
<feature type="splice variant" id="VSP_012523" description="In isoform 4." evidence="8">
    <location>
        <begin position="168"/>
        <end position="249"/>
    </location>
</feature>
<feature type="splice variant" id="VSP_012524" description="In isoform 5." evidence="8">
    <original>EYG</original>
    <variation>MER</variation>
    <location>
        <begin position="170"/>
        <end position="172"/>
    </location>
</feature>
<feature type="splice variant" id="VSP_012525" description="In isoform 5." evidence="8">
    <location>
        <begin position="173"/>
        <end position="249"/>
    </location>
</feature>
<feature type="splice variant" id="VSP_012526" description="In isoform 3." evidence="8">
    <original>CSIEWFHFACVG</original>
    <variation>VRTVSSGLGEEL</variation>
    <location>
        <begin position="217"/>
        <end position="228"/>
    </location>
</feature>
<feature type="splice variant" id="VSP_012527" description="In isoform 3." evidence="8">
    <location>
        <begin position="229"/>
        <end position="249"/>
    </location>
</feature>
<feature type="sequence conflict" description="In Ref. 2; BAC27489." evidence="11" ref="2">
    <original>A</original>
    <variation>S</variation>
    <location>
        <position position="105"/>
    </location>
</feature>
<feature type="sequence conflict" description="In Ref. 2; BAC27489." evidence="11" ref="2">
    <original>G</original>
    <variation>S</variation>
    <location>
        <position position="179"/>
    </location>
</feature>
<feature type="strand" evidence="13">
    <location>
        <begin position="207"/>
        <end position="210"/>
    </location>
</feature>
<feature type="turn" evidence="13">
    <location>
        <begin position="224"/>
        <end position="228"/>
    </location>
</feature>
<feature type="turn" evidence="13">
    <location>
        <begin position="240"/>
        <end position="242"/>
    </location>
</feature>
<organism>
    <name type="scientific">Mus musculus</name>
    <name type="common">Mouse</name>
    <dbReference type="NCBI Taxonomy" id="10090"/>
    <lineage>
        <taxon>Eukaryota</taxon>
        <taxon>Metazoa</taxon>
        <taxon>Chordata</taxon>
        <taxon>Craniata</taxon>
        <taxon>Vertebrata</taxon>
        <taxon>Euteleostomi</taxon>
        <taxon>Mammalia</taxon>
        <taxon>Eutheria</taxon>
        <taxon>Euarchontoglires</taxon>
        <taxon>Glires</taxon>
        <taxon>Rodentia</taxon>
        <taxon>Myomorpha</taxon>
        <taxon>Muroidea</taxon>
        <taxon>Muridae</taxon>
        <taxon>Murinae</taxon>
        <taxon>Mus</taxon>
        <taxon>Mus</taxon>
    </lineage>
</organism>
<reference key="1">
    <citation type="journal article" date="2002" name="Cancer Res.">
        <title>Mouse ING1 homologue, a protein interacting with A1, enhances cell death and is inhibited by A1 in mammary epithelial cells.</title>
        <authorList>
            <person name="Ha S."/>
            <person name="Lee S."/>
            <person name="Chung M."/>
            <person name="Choi Y."/>
        </authorList>
    </citation>
    <scope>NUCLEOTIDE SEQUENCE [MRNA] (ISOFORMS 3; 4 AND 5)</scope>
    <scope>ALTERNATIVE SPLICING (ISOFORM 2)</scope>
    <scope>FUNCTION</scope>
    <scope>SUBCELLULAR LOCATION</scope>
    <scope>INTERACTION WITH BCL2A1</scope>
    <scope>TISSUE SPECIFICITY</scope>
    <source>
        <strain>ICR</strain>
        <tissue>Mammary gland</tissue>
    </source>
</reference>
<reference key="2">
    <citation type="journal article" date="2005" name="Science">
        <title>The transcriptional landscape of the mammalian genome.</title>
        <authorList>
            <person name="Carninci P."/>
            <person name="Kasukawa T."/>
            <person name="Katayama S."/>
            <person name="Gough J."/>
            <person name="Frith M.C."/>
            <person name="Maeda N."/>
            <person name="Oyama R."/>
            <person name="Ravasi T."/>
            <person name="Lenhard B."/>
            <person name="Wells C."/>
            <person name="Kodzius R."/>
            <person name="Shimokawa K."/>
            <person name="Bajic V.B."/>
            <person name="Brenner S.E."/>
            <person name="Batalov S."/>
            <person name="Forrest A.R."/>
            <person name="Zavolan M."/>
            <person name="Davis M.J."/>
            <person name="Wilming L.G."/>
            <person name="Aidinis V."/>
            <person name="Allen J.E."/>
            <person name="Ambesi-Impiombato A."/>
            <person name="Apweiler R."/>
            <person name="Aturaliya R.N."/>
            <person name="Bailey T.L."/>
            <person name="Bansal M."/>
            <person name="Baxter L."/>
            <person name="Beisel K.W."/>
            <person name="Bersano T."/>
            <person name="Bono H."/>
            <person name="Chalk A.M."/>
            <person name="Chiu K.P."/>
            <person name="Choudhary V."/>
            <person name="Christoffels A."/>
            <person name="Clutterbuck D.R."/>
            <person name="Crowe M.L."/>
            <person name="Dalla E."/>
            <person name="Dalrymple B.P."/>
            <person name="de Bono B."/>
            <person name="Della Gatta G."/>
            <person name="di Bernardo D."/>
            <person name="Down T."/>
            <person name="Engstrom P."/>
            <person name="Fagiolini M."/>
            <person name="Faulkner G."/>
            <person name="Fletcher C.F."/>
            <person name="Fukushima T."/>
            <person name="Furuno M."/>
            <person name="Futaki S."/>
            <person name="Gariboldi M."/>
            <person name="Georgii-Hemming P."/>
            <person name="Gingeras T.R."/>
            <person name="Gojobori T."/>
            <person name="Green R.E."/>
            <person name="Gustincich S."/>
            <person name="Harbers M."/>
            <person name="Hayashi Y."/>
            <person name="Hensch T.K."/>
            <person name="Hirokawa N."/>
            <person name="Hill D."/>
            <person name="Huminiecki L."/>
            <person name="Iacono M."/>
            <person name="Ikeo K."/>
            <person name="Iwama A."/>
            <person name="Ishikawa T."/>
            <person name="Jakt M."/>
            <person name="Kanapin A."/>
            <person name="Katoh M."/>
            <person name="Kawasawa Y."/>
            <person name="Kelso J."/>
            <person name="Kitamura H."/>
            <person name="Kitano H."/>
            <person name="Kollias G."/>
            <person name="Krishnan S.P."/>
            <person name="Kruger A."/>
            <person name="Kummerfeld S.K."/>
            <person name="Kurochkin I.V."/>
            <person name="Lareau L.F."/>
            <person name="Lazarevic D."/>
            <person name="Lipovich L."/>
            <person name="Liu J."/>
            <person name="Liuni S."/>
            <person name="McWilliam S."/>
            <person name="Madan Babu M."/>
            <person name="Madera M."/>
            <person name="Marchionni L."/>
            <person name="Matsuda H."/>
            <person name="Matsuzawa S."/>
            <person name="Miki H."/>
            <person name="Mignone F."/>
            <person name="Miyake S."/>
            <person name="Morris K."/>
            <person name="Mottagui-Tabar S."/>
            <person name="Mulder N."/>
            <person name="Nakano N."/>
            <person name="Nakauchi H."/>
            <person name="Ng P."/>
            <person name="Nilsson R."/>
            <person name="Nishiguchi S."/>
            <person name="Nishikawa S."/>
            <person name="Nori F."/>
            <person name="Ohara O."/>
            <person name="Okazaki Y."/>
            <person name="Orlando V."/>
            <person name="Pang K.C."/>
            <person name="Pavan W.J."/>
            <person name="Pavesi G."/>
            <person name="Pesole G."/>
            <person name="Petrovsky N."/>
            <person name="Piazza S."/>
            <person name="Reed J."/>
            <person name="Reid J.F."/>
            <person name="Ring B.Z."/>
            <person name="Ringwald M."/>
            <person name="Rost B."/>
            <person name="Ruan Y."/>
            <person name="Salzberg S.L."/>
            <person name="Sandelin A."/>
            <person name="Schneider C."/>
            <person name="Schoenbach C."/>
            <person name="Sekiguchi K."/>
            <person name="Semple C.A."/>
            <person name="Seno S."/>
            <person name="Sessa L."/>
            <person name="Sheng Y."/>
            <person name="Shibata Y."/>
            <person name="Shimada H."/>
            <person name="Shimada K."/>
            <person name="Silva D."/>
            <person name="Sinclair B."/>
            <person name="Sperling S."/>
            <person name="Stupka E."/>
            <person name="Sugiura K."/>
            <person name="Sultana R."/>
            <person name="Takenaka Y."/>
            <person name="Taki K."/>
            <person name="Tammoja K."/>
            <person name="Tan S.L."/>
            <person name="Tang S."/>
            <person name="Taylor M.S."/>
            <person name="Tegner J."/>
            <person name="Teichmann S.A."/>
            <person name="Ueda H.R."/>
            <person name="van Nimwegen E."/>
            <person name="Verardo R."/>
            <person name="Wei C.L."/>
            <person name="Yagi K."/>
            <person name="Yamanishi H."/>
            <person name="Zabarovsky E."/>
            <person name="Zhu S."/>
            <person name="Zimmer A."/>
            <person name="Hide W."/>
            <person name="Bult C."/>
            <person name="Grimmond S.M."/>
            <person name="Teasdale R.D."/>
            <person name="Liu E.T."/>
            <person name="Brusic V."/>
            <person name="Quackenbush J."/>
            <person name="Wahlestedt C."/>
            <person name="Mattick J.S."/>
            <person name="Hume D.A."/>
            <person name="Kai C."/>
            <person name="Sasaki D."/>
            <person name="Tomaru Y."/>
            <person name="Fukuda S."/>
            <person name="Kanamori-Katayama M."/>
            <person name="Suzuki M."/>
            <person name="Aoki J."/>
            <person name="Arakawa T."/>
            <person name="Iida J."/>
            <person name="Imamura K."/>
            <person name="Itoh M."/>
            <person name="Kato T."/>
            <person name="Kawaji H."/>
            <person name="Kawagashira N."/>
            <person name="Kawashima T."/>
            <person name="Kojima M."/>
            <person name="Kondo S."/>
            <person name="Konno H."/>
            <person name="Nakano K."/>
            <person name="Ninomiya N."/>
            <person name="Nishio T."/>
            <person name="Okada M."/>
            <person name="Plessy C."/>
            <person name="Shibata K."/>
            <person name="Shiraki T."/>
            <person name="Suzuki S."/>
            <person name="Tagami M."/>
            <person name="Waki K."/>
            <person name="Watahiki A."/>
            <person name="Okamura-Oho Y."/>
            <person name="Suzuki H."/>
            <person name="Kawai J."/>
            <person name="Hayashizaki Y."/>
        </authorList>
    </citation>
    <scope>NUCLEOTIDE SEQUENCE [LARGE SCALE MRNA] (ISOFORMS 1 AND 2)</scope>
    <source>
        <strain>C57BL/6J</strain>
        <tissue>Kidney</tissue>
        <tissue>Pancreas</tissue>
        <tissue>Testis</tissue>
        <tissue>Tongue</tissue>
    </source>
</reference>
<reference key="3">
    <citation type="journal article" date="2004" name="Genome Res.">
        <title>The status, quality, and expansion of the NIH full-length cDNA project: the Mammalian Gene Collection (MGC).</title>
        <authorList>
            <consortium name="The MGC Project Team"/>
        </authorList>
    </citation>
    <scope>NUCLEOTIDE SEQUENCE [LARGE SCALE MRNA] (ISOFORM 2)</scope>
    <source>
        <strain>FVB/N</strain>
        <tissue>Mammary tumor</tissue>
    </source>
</reference>
<reference key="4">
    <citation type="journal article" date="2013" name="Mol. Cell">
        <title>SIRT5-mediated lysine desuccinylation impacts diverse metabolic pathways.</title>
        <authorList>
            <person name="Park J."/>
            <person name="Chen Y."/>
            <person name="Tishkoff D.X."/>
            <person name="Peng C."/>
            <person name="Tan M."/>
            <person name="Dai L."/>
            <person name="Xie Z."/>
            <person name="Zhang Y."/>
            <person name="Zwaans B.M."/>
            <person name="Skinner M.E."/>
            <person name="Lombard D.B."/>
            <person name="Zhao Y."/>
        </authorList>
    </citation>
    <scope>ACETYLATION [LARGE SCALE ANALYSIS] AT LYS-127; LYS-129; LYS-146; LYS-148 AND LYS-156</scope>
    <scope>IDENTIFICATION BY MASS SPECTROMETRY [LARGE SCALE ANALYSIS]</scope>
    <source>
        <tissue>Embryonic fibroblast</tissue>
    </source>
</reference>
<reference key="5">
    <citation type="submission" date="2004-11" db="PDB data bank">
        <title>Solution structure of PHD domain in ING1-like protein BAC25079.</title>
        <authorList>
            <consortium name="RIKEN structural genomics initiative (RSGI)"/>
        </authorList>
    </citation>
    <scope>STRUCTURE BY NMR OF 168-245</scope>
</reference>
<accession>Q8C0D7</accession>
<accession>Q8C1S7</accession>
<accession>Q8K3Q5</accession>
<accession>Q8K3Q6</accession>
<accession>Q8K3Q7</accession>
<accession>Q9D7F9</accession>
<proteinExistence type="evidence at protein level"/>
<comment type="function">
    <text evidence="3 7">Component of HBO1 complexes, which specifically mediate acetylation of histone H3 at 'Lys-14' (H3K14ac), and have reduced activity toward histone H4. Through chromatin acetylation it may function in DNA replication. May inhibit tumor progression by modulating the transcriptional output of signaling pathways which regulate cell proliferation. Can suppress brain tumor angiogenesis through transcriptional repression of RELA/NFKB3 target genes when complexed with RELA. May also specifically suppress loss of contact inhibition elicited by activated oncogenes such as MYC. Represses hypoxia inducible factor's (HIF) activity by interacting with HIF prolyl hydroxylase 2 (EGLN1) (By similarity). Can enhance apoptosis induced by serum starvation in mammary epithelial cell line HC11 (PubMed:11888890).</text>
</comment>
<comment type="subunit">
    <text evidence="3">Homodimer. Component of the HBO1 complex composed of KAT7/HBO1, MEAF6, ING4 or ING5, and one scaffold subunit: complexes containing BRPF scaffold (BRPF1, BRD1/BRPF2 or BRPF3) direct KAT7/HBO1 specificity towards H3K14ac, while complexes containing JADE scaffold (JADE1, JADE2 and JADE3) mediate acetylation of histone H4. Interacts with H3K4me3 and to a lesser extent with H3K4me2, the interaction augments KAT7/HBO1 acetylation activity on H3 tails. Interacts with EP300, RELA and TP53; these interactions may be indirect. Interacts with EGLN1.</text>
</comment>
<comment type="subunit">
    <molecule>Isoform 3</molecule>
    <text evidence="7">Interacts with BCL2A1.</text>
</comment>
<comment type="subunit">
    <molecule>Isoform 4</molecule>
    <text evidence="7">Interacts with BCL2A1.</text>
</comment>
<comment type="subunit">
    <molecule>Isoform 5</molecule>
    <text evidence="7">Interacts with BCL2A1.</text>
</comment>
<comment type="interaction">
    <interactant intactId="EBI-645598">
        <id>Q8C0D7</id>
    </interactant>
    <interactant intactId="EBI-2903247">
        <id>P22605</id>
        <label>Rarb</label>
    </interactant>
    <organismsDiffer>false</organismsDiffer>
    <experiments>3</experiments>
</comment>
<comment type="subcellular location">
    <subcellularLocation>
        <location evidence="7">Nucleus</location>
    </subcellularLocation>
</comment>
<comment type="alternative products">
    <event type="alternative splicing"/>
    <isoform>
        <id>Q8C0D7-1</id>
        <name>1</name>
        <sequence type="displayed"/>
    </isoform>
    <isoform>
        <id>Q8C0D7-2</id>
        <name>2</name>
        <name evidence="8">mINGh-M</name>
        <sequence type="described" ref="VSP_012521 VSP_012522"/>
    </isoform>
    <isoform>
        <id>Q8C0D7-3</id>
        <name>3</name>
        <name evidence="8">mINGh-L2</name>
        <sequence type="described" ref="VSP_012521 VSP_012522 VSP_012526 VSP_012527"/>
    </isoform>
    <isoform>
        <id>Q8C0D7-4</id>
        <name>4</name>
        <name evidence="8">mINGh-L</name>
        <sequence type="described" ref="VSP_012521 VSP_012522 VSP_012523"/>
    </isoform>
    <isoform>
        <id>Q8C0D7-5</id>
        <name>5</name>
        <name evidence="8">mINGh-S</name>
        <sequence type="described" ref="VSP_012520 VSP_012524 VSP_012525"/>
    </isoform>
</comment>
<comment type="tissue specificity">
    <text evidence="7">Isoform 2, isoform 3, isoform 4 and isoform 5 are expressed in the mammary gland, ovary, spleen and muscle.</text>
</comment>
<comment type="tissue specificity">
    <molecule>Isoform 2</molecule>
    <text evidence="7">Expressed in the mammary gland, ovary, spleen and muscle.</text>
</comment>
<comment type="tissue specificity">
    <molecule>Isoform 3</molecule>
    <text evidence="7">Expressed in the mammary gland, ovary, spleen and muscle.</text>
</comment>
<comment type="tissue specificity">
    <molecule>Isoform 4</molecule>
    <text evidence="7">Expressed in the mammary gland, ovary, spleen and muscle.</text>
</comment>
<comment type="tissue specificity">
    <molecule>Isoform 5</molecule>
    <text evidence="7">Expressed in the mammary gland, ovary, spleen and muscle.</text>
</comment>
<comment type="domain">
    <text evidence="3">The PHD-type zinc finger mediates the binding to H3K4me3.</text>
</comment>
<comment type="domain">
    <text evidence="3">The N-terminal coiled-coil domain mediates homodimerization.</text>
</comment>
<comment type="PTM">
    <text evidence="3">Citrullination by PADI4 within the nuclear localization signal disrupts the interaction with p53 and increases susceptibility to degradation.</text>
</comment>
<comment type="miscellaneous">
    <molecule>Isoform 2</molecule>
    <text evidence="11">May be due to a competing donor splice site.</text>
</comment>
<comment type="miscellaneous">
    <molecule>Isoform 3</molecule>
    <text evidence="11">May be due to intron retention.</text>
</comment>
<comment type="miscellaneous">
    <molecule>Isoform 4</molecule>
    <text evidence="11">May be due to intron retention.</text>
</comment>
<comment type="miscellaneous">
    <molecule>Isoform 5</molecule>
    <text evidence="11">May be due to a competing acceptor splice site.</text>
</comment>
<comment type="similarity">
    <text evidence="11">Belongs to the ING family.</text>
</comment>
<comment type="sequence caution" evidence="11">
    <conflict type="frameshift">
        <sequence resource="EMBL-CDS" id="BAC25009"/>
    </conflict>
</comment>
<gene>
    <name type="primary">Ing4</name>
</gene>
<protein>
    <recommendedName>
        <fullName>Inhibitor of growth protein 4</fullName>
    </recommendedName>
    <alternativeName>
        <fullName>p29ING4</fullName>
    </alternativeName>
</protein>
<sequence>MAAGMYLEHYLDSIENLPFELQRNFQLMRDLDQRTEDLKAEIDKLATEYMSSARSLSSEEKLALLRQIQEAYGKCKEFGDDKVQLAMQTYEMVDKHIRRLDTDLARFEADLKEKQIESSDYDSSSSKGKKKGRTQKEKKAARARSKGKNSDEEAPKAAQKKLKLVRTSPEYGMPSVTFGSVHPSDVLDMPVDPNEPTYCLCHQVSYGEMIGCDNPDCSIEWFHFACVGLTTKPRGKWFCPRCSQERKKK</sequence>